<feature type="chain" id="PRO_0000094933" description="Phosphatidylinositol-3-phosphate phosphatase MTMR1">
    <location>
        <begin position="1"/>
        <end position="669"/>
    </location>
</feature>
<feature type="domain" description="GRAM" evidence="3">
    <location>
        <begin position="94"/>
        <end position="165"/>
    </location>
</feature>
<feature type="domain" description="Myotubularin phosphatase" evidence="4">
    <location>
        <begin position="230"/>
        <end position="605"/>
    </location>
</feature>
<feature type="region of interest" description="Disordered" evidence="6">
    <location>
        <begin position="1"/>
        <end position="55"/>
    </location>
</feature>
<feature type="region of interest" description="Required for dimerization" evidence="1">
    <location>
        <begin position="612"/>
        <end position="669"/>
    </location>
</feature>
<feature type="region of interest" description="Disordered" evidence="6">
    <location>
        <begin position="644"/>
        <end position="669"/>
    </location>
</feature>
<feature type="compositionally biased region" description="Low complexity" evidence="6">
    <location>
        <begin position="1"/>
        <end position="17"/>
    </location>
</feature>
<feature type="compositionally biased region" description="Low complexity" evidence="6">
    <location>
        <begin position="649"/>
        <end position="661"/>
    </location>
</feature>
<feature type="active site" description="Phosphocysteine intermediate" evidence="2 5">
    <location>
        <position position="442"/>
    </location>
</feature>
<feature type="binding site" evidence="2">
    <location>
        <position position="355"/>
    </location>
    <ligand>
        <name>a 1,2-diacyl-sn-glycero-3-phospho-(1D-myo-inositol-3-phosphate)</name>
        <dbReference type="ChEBI" id="CHEBI:58088"/>
    </ligand>
</feature>
<feature type="binding site" evidence="2">
    <location>
        <position position="380"/>
    </location>
    <ligand>
        <name>a 1,2-diacyl-sn-glycero-3-phospho-(1D-myo-inositol-3-phosphate)</name>
        <dbReference type="ChEBI" id="CHEBI:58088"/>
    </ligand>
</feature>
<feature type="binding site" evidence="2">
    <location>
        <position position="381"/>
    </location>
    <ligand>
        <name>a 1,2-diacyl-sn-glycero-3-phospho-(1D-myo-inositol-3-phosphate)</name>
        <dbReference type="ChEBI" id="CHEBI:58088"/>
    </ligand>
</feature>
<feature type="binding site" evidence="2">
    <location>
        <position position="443"/>
    </location>
    <ligand>
        <name>a 1,2-diacyl-sn-glycero-3-phospho-(1D-myo-inositol-3-phosphate)</name>
        <dbReference type="ChEBI" id="CHEBI:58088"/>
    </ligand>
</feature>
<feature type="binding site" evidence="1">
    <location>
        <position position="443"/>
    </location>
    <ligand>
        <name>phosphate</name>
        <dbReference type="ChEBI" id="CHEBI:43474"/>
    </ligand>
</feature>
<feature type="binding site" evidence="2">
    <location>
        <position position="444"/>
    </location>
    <ligand>
        <name>a 1,2-diacyl-sn-glycero-3-phospho-(1D-myo-inositol-3-phosphate)</name>
        <dbReference type="ChEBI" id="CHEBI:58088"/>
    </ligand>
</feature>
<feature type="binding site" evidence="2">
    <location>
        <position position="445"/>
    </location>
    <ligand>
        <name>a 1,2-diacyl-sn-glycero-3-phospho-(1D-myo-inositol-3-phosphate)</name>
        <dbReference type="ChEBI" id="CHEBI:58088"/>
    </ligand>
</feature>
<feature type="binding site" evidence="1">
    <location>
        <position position="445"/>
    </location>
    <ligand>
        <name>phosphate</name>
        <dbReference type="ChEBI" id="CHEBI:43474"/>
    </ligand>
</feature>
<feature type="binding site" evidence="2">
    <location>
        <position position="446"/>
    </location>
    <ligand>
        <name>a 1,2-diacyl-sn-glycero-3-phospho-(1D-myo-inositol-3-phosphate)</name>
        <dbReference type="ChEBI" id="CHEBI:58088"/>
    </ligand>
</feature>
<feature type="binding site" evidence="1">
    <location>
        <position position="446"/>
    </location>
    <ligand>
        <name>phosphate</name>
        <dbReference type="ChEBI" id="CHEBI:43474"/>
    </ligand>
</feature>
<feature type="binding site" evidence="2">
    <location>
        <position position="447"/>
    </location>
    <ligand>
        <name>a 1,2-diacyl-sn-glycero-3-phospho-(1D-myo-inositol-3-phosphate)</name>
        <dbReference type="ChEBI" id="CHEBI:58088"/>
    </ligand>
</feature>
<feature type="binding site" evidence="1">
    <location>
        <position position="447"/>
    </location>
    <ligand>
        <name>phosphate</name>
        <dbReference type="ChEBI" id="CHEBI:43474"/>
    </ligand>
</feature>
<feature type="binding site" evidence="2">
    <location>
        <position position="448"/>
    </location>
    <ligand>
        <name>a 1,2-diacyl-sn-glycero-3-phospho-(1D-myo-inositol-3-phosphate)</name>
        <dbReference type="ChEBI" id="CHEBI:58088"/>
    </ligand>
</feature>
<feature type="binding site" evidence="1">
    <location>
        <position position="448"/>
    </location>
    <ligand>
        <name>phosphate</name>
        <dbReference type="ChEBI" id="CHEBI:43474"/>
    </ligand>
</feature>
<feature type="binding site" evidence="2">
    <location>
        <position position="488"/>
    </location>
    <ligand>
        <name>a 1,2-diacyl-sn-glycero-3-phospho-(1D-myo-inositol-3-phosphate)</name>
        <dbReference type="ChEBI" id="CHEBI:58088"/>
    </ligand>
</feature>
<feature type="modified residue" description="N-acetylmethionine" evidence="1">
    <location>
        <position position="1"/>
    </location>
</feature>
<feature type="modified residue" description="Phosphoserine" evidence="10">
    <location>
        <position position="47"/>
    </location>
</feature>
<feature type="modified residue" description="Phosphoserine" evidence="10">
    <location>
        <position position="53"/>
    </location>
</feature>
<keyword id="KW-0007">Acetylation</keyword>
<keyword id="KW-1003">Cell membrane</keyword>
<keyword id="KW-0963">Cytoplasm</keyword>
<keyword id="KW-0378">Hydrolase</keyword>
<keyword id="KW-0443">Lipid metabolism</keyword>
<keyword id="KW-0472">Membrane</keyword>
<keyword id="KW-0597">Phosphoprotein</keyword>
<keyword id="KW-1185">Reference proteome</keyword>
<gene>
    <name evidence="9" type="primary">Mtmr1</name>
</gene>
<organism>
    <name type="scientific">Mus musculus</name>
    <name type="common">Mouse</name>
    <dbReference type="NCBI Taxonomy" id="10090"/>
    <lineage>
        <taxon>Eukaryota</taxon>
        <taxon>Metazoa</taxon>
        <taxon>Chordata</taxon>
        <taxon>Craniata</taxon>
        <taxon>Vertebrata</taxon>
        <taxon>Euteleostomi</taxon>
        <taxon>Mammalia</taxon>
        <taxon>Eutheria</taxon>
        <taxon>Euarchontoglires</taxon>
        <taxon>Glires</taxon>
        <taxon>Rodentia</taxon>
        <taxon>Myomorpha</taxon>
        <taxon>Muroidea</taxon>
        <taxon>Muridae</taxon>
        <taxon>Murinae</taxon>
        <taxon>Mus</taxon>
        <taxon>Mus</taxon>
    </lineage>
</organism>
<accession>Q9Z2C4</accession>
<protein>
    <recommendedName>
        <fullName>Phosphatidylinositol-3-phosphate phosphatase MTMR1</fullName>
        <ecNumber evidence="1">3.1.3.-</ecNumber>
    </recommendedName>
    <alternativeName>
        <fullName>Myotubularin-related protein 1</fullName>
    </alternativeName>
    <alternativeName>
        <fullName>Phosphatidylinositol-3,5-bisphosphate 3-phosphatase</fullName>
        <ecNumber evidence="1">3.1.3.95</ecNumber>
    </alternativeName>
    <alternativeName>
        <fullName>Phosphatidylinositol-3-phosphate phosphatase</fullName>
    </alternativeName>
</protein>
<proteinExistence type="evidence at protein level"/>
<reference key="1">
    <citation type="journal article" date="1998" name="Hum. Mol. Genet.">
        <title>Characterization of the myotubularin dual specificity phosphatase gene family from yeast to human.</title>
        <authorList>
            <person name="Laporte J."/>
            <person name="Blondeau F."/>
            <person name="Buj-Bello A."/>
            <person name="Tentler D."/>
            <person name="Kretz C."/>
            <person name="Dahl N."/>
            <person name="Mandel J.-L."/>
        </authorList>
    </citation>
    <scope>NUCLEOTIDE SEQUENCE [MRNA]</scope>
</reference>
<reference key="2">
    <citation type="submission" date="1999-02" db="EMBL/GenBank/DDBJ databases">
        <title>Comparative sequence analysis of the mouse Mtm locus and the corresponding region of human Xq28.</title>
        <authorList>
            <person name="Wiehe T."/>
            <person name="Zhao W."/>
            <person name="Herman G.E."/>
            <person name="Rosenthal A."/>
            <person name="Platzer M."/>
        </authorList>
    </citation>
    <scope>NUCLEOTIDE SEQUENCE [GENOMIC DNA]</scope>
</reference>
<reference key="3">
    <citation type="journal article" date="2004" name="Genome Res.">
        <title>The status, quality, and expansion of the NIH full-length cDNA project: the Mammalian Gene Collection (MGC).</title>
        <authorList>
            <consortium name="The MGC Project Team"/>
        </authorList>
    </citation>
    <scope>NUCLEOTIDE SEQUENCE [LARGE SCALE MRNA]</scope>
    <source>
        <strain>C57BL/6J</strain>
        <tissue>Brain</tissue>
    </source>
</reference>
<reference key="4">
    <citation type="journal article" date="2002" name="Hum. Mol. Genet.">
        <title>Muscle-specific alternative splicing of myotubularin-related 1 gene is impaired in DM1 muscle cells.</title>
        <authorList>
            <person name="Buj-Bello A."/>
            <person name="Furling D."/>
            <person name="Tronchere H."/>
            <person name="Laporte J."/>
            <person name="Lerouge T."/>
            <person name="Butler-Browne G.S."/>
            <person name="Mandel J.L."/>
        </authorList>
    </citation>
    <scope>FUNCTION</scope>
    <scope>CATALYTIC ACTIVITY</scope>
    <scope>SUBCELLULAR LOCATION</scope>
    <scope>TISSUE SPECIFICITY</scope>
</reference>
<reference key="5">
    <citation type="journal article" date="2010" name="Cell">
        <title>A tissue-specific atlas of mouse protein phosphorylation and expression.</title>
        <authorList>
            <person name="Huttlin E.L."/>
            <person name="Jedrychowski M.P."/>
            <person name="Elias J.E."/>
            <person name="Goswami T."/>
            <person name="Rad R."/>
            <person name="Beausoleil S.A."/>
            <person name="Villen J."/>
            <person name="Haas W."/>
            <person name="Sowa M.E."/>
            <person name="Gygi S.P."/>
        </authorList>
    </citation>
    <scope>PHOSPHORYLATION [LARGE SCALE ANALYSIS] AT SER-47 AND SER-53</scope>
    <scope>IDENTIFICATION BY MASS SPECTROMETRY [LARGE SCALE ANALYSIS]</scope>
    <source>
        <tissue>Brain</tissue>
        <tissue>Kidney</tissue>
        <tissue>Lung</tissue>
        <tissue>Pancreas</tissue>
        <tissue>Testis</tissue>
    </source>
</reference>
<comment type="function">
    <text evidence="1 7">Lipid phosphatase that specifically dephosphorylates the D-3 position of phosphatidylinositol 3-phosphate, generating phosphatidylinositol (PubMed:12217958). Could also dephosphorylate phosphatidylinositol 3,5-bisphosphate to produce phosphatidylinositol 5-phosphate (By similarity).</text>
</comment>
<comment type="catalytic activity">
    <reaction evidence="7">
        <text>a 1,2-diacyl-sn-glycero-3-phospho-(1D-myo-inositol-3-phosphate) + H2O = a 1,2-diacyl-sn-glycero-3-phospho-(1D-myo-inositol) + phosphate</text>
        <dbReference type="Rhea" id="RHEA:12316"/>
        <dbReference type="ChEBI" id="CHEBI:15377"/>
        <dbReference type="ChEBI" id="CHEBI:43474"/>
        <dbReference type="ChEBI" id="CHEBI:57880"/>
        <dbReference type="ChEBI" id="CHEBI:58088"/>
    </reaction>
</comment>
<comment type="catalytic activity">
    <reaction evidence="1">
        <text>1,2-dioctanoyl-sn-glycero-3-phospho-(1-D-myo-inositol-3-phosphate) + H2O = 1,2-dioctanoyl-sn-glycero-3-phospho-(1D-myo-inositol) + phosphate</text>
        <dbReference type="Rhea" id="RHEA:42328"/>
        <dbReference type="ChEBI" id="CHEBI:15377"/>
        <dbReference type="ChEBI" id="CHEBI:43474"/>
        <dbReference type="ChEBI" id="CHEBI:65221"/>
        <dbReference type="ChEBI" id="CHEBI:78934"/>
    </reaction>
</comment>
<comment type="catalytic activity">
    <reaction evidence="1">
        <text>a 1,2-diacyl-sn-glycero-3-phospho-(1D-myo-inositol-3,5-bisphosphate) + H2O = a 1,2-diacyl-sn-glycero-3-phospho-(1D-myo-inositol-5-phosphate) + phosphate</text>
        <dbReference type="Rhea" id="RHEA:39019"/>
        <dbReference type="ChEBI" id="CHEBI:15377"/>
        <dbReference type="ChEBI" id="CHEBI:43474"/>
        <dbReference type="ChEBI" id="CHEBI:57795"/>
        <dbReference type="ChEBI" id="CHEBI:57923"/>
        <dbReference type="EC" id="3.1.3.95"/>
    </reaction>
</comment>
<comment type="subunit">
    <text evidence="1">Homodimer.</text>
</comment>
<comment type="subcellular location">
    <subcellularLocation>
        <location evidence="7">Cell membrane</location>
        <topology evidence="7">Peripheral membrane protein</topology>
        <orientation evidence="7">Cytoplasmic side</orientation>
    </subcellularLocation>
    <subcellularLocation>
        <location evidence="7">Cytoplasm</location>
    </subcellularLocation>
</comment>
<comment type="tissue specificity">
    <text evidence="7">Widely expressed. Detected in skeletal muscle, heart, lung, liver and brain.</text>
</comment>
<comment type="domain">
    <text evidence="1">The C-terminal region is required for dimerization.</text>
</comment>
<comment type="similarity">
    <text evidence="8">Belongs to the protein-tyrosine phosphatase family. Non-receptor class myotubularin subfamily.</text>
</comment>
<name>MTMR1_MOUSE</name>
<evidence type="ECO:0000250" key="1">
    <source>
        <dbReference type="UniProtKB" id="Q13613"/>
    </source>
</evidence>
<evidence type="ECO:0000250" key="2">
    <source>
        <dbReference type="UniProtKB" id="Q13614"/>
    </source>
</evidence>
<evidence type="ECO:0000255" key="3"/>
<evidence type="ECO:0000255" key="4">
    <source>
        <dbReference type="PROSITE-ProRule" id="PRU00669"/>
    </source>
</evidence>
<evidence type="ECO:0000255" key="5">
    <source>
        <dbReference type="PROSITE-ProRule" id="PRU10044"/>
    </source>
</evidence>
<evidence type="ECO:0000256" key="6">
    <source>
        <dbReference type="SAM" id="MobiDB-lite"/>
    </source>
</evidence>
<evidence type="ECO:0000269" key="7">
    <source>
    </source>
</evidence>
<evidence type="ECO:0000305" key="8"/>
<evidence type="ECO:0000312" key="9">
    <source>
        <dbReference type="MGI" id="MGI:1858271"/>
    </source>
</evidence>
<evidence type="ECO:0007744" key="10">
    <source>
    </source>
</evidence>
<dbReference type="EC" id="3.1.3.-" evidence="1"/>
<dbReference type="EC" id="3.1.3.95" evidence="1"/>
<dbReference type="EMBL" id="AF073997">
    <property type="protein sequence ID" value="AAC77822.1"/>
    <property type="molecule type" value="mRNA"/>
</dbReference>
<dbReference type="EMBL" id="AF125314">
    <property type="status" value="NOT_ANNOTATED_CDS"/>
    <property type="molecule type" value="Genomic_DNA"/>
</dbReference>
<dbReference type="EMBL" id="BC056376">
    <property type="protein sequence ID" value="AAH56376.1"/>
    <property type="molecule type" value="mRNA"/>
</dbReference>
<dbReference type="EMBL" id="BC057337">
    <property type="protein sequence ID" value="AAH57337.1"/>
    <property type="molecule type" value="mRNA"/>
</dbReference>
<dbReference type="CCDS" id="CCDS30178.1"/>
<dbReference type="RefSeq" id="NP_001300631.1">
    <property type="nucleotide sequence ID" value="NM_001313702.1"/>
</dbReference>
<dbReference type="RefSeq" id="NP_001300632.1">
    <property type="nucleotide sequence ID" value="NM_001313703.1"/>
</dbReference>
<dbReference type="RefSeq" id="NP_001300633.1">
    <property type="nucleotide sequence ID" value="NM_001313704.1"/>
</dbReference>
<dbReference type="RefSeq" id="NP_001300635.1">
    <property type="nucleotide sequence ID" value="NM_001313706.1"/>
</dbReference>
<dbReference type="RefSeq" id="NP_001300636.1">
    <property type="nucleotide sequence ID" value="NM_001313707.1"/>
</dbReference>
<dbReference type="RefSeq" id="NP_058681.1">
    <property type="nucleotide sequence ID" value="NM_016985.3"/>
</dbReference>
<dbReference type="SMR" id="Q9Z2C4"/>
<dbReference type="BioGRID" id="207292">
    <property type="interactions" value="9"/>
</dbReference>
<dbReference type="FunCoup" id="Q9Z2C4">
    <property type="interactions" value="1597"/>
</dbReference>
<dbReference type="IntAct" id="Q9Z2C4">
    <property type="interactions" value="2"/>
</dbReference>
<dbReference type="MINT" id="Q9Z2C4"/>
<dbReference type="STRING" id="10090.ENSMUSP00000015358"/>
<dbReference type="GlyGen" id="Q9Z2C4">
    <property type="glycosylation" value="2 sites, 1 O-linked glycan (2 sites)"/>
</dbReference>
<dbReference type="iPTMnet" id="Q9Z2C4"/>
<dbReference type="PhosphoSitePlus" id="Q9Z2C4"/>
<dbReference type="PaxDb" id="10090-ENSMUSP00000110248"/>
<dbReference type="PeptideAtlas" id="Q9Z2C4"/>
<dbReference type="ProteomicsDB" id="286074"/>
<dbReference type="Pumba" id="Q9Z2C4"/>
<dbReference type="Antibodypedia" id="442">
    <property type="antibodies" value="100 antibodies from 24 providers"/>
</dbReference>
<dbReference type="DNASU" id="53332"/>
<dbReference type="Ensembl" id="ENSMUST00000015358.8">
    <property type="protein sequence ID" value="ENSMUSP00000015358.2"/>
    <property type="gene ID" value="ENSMUSG00000015214.15"/>
</dbReference>
<dbReference type="GeneID" id="53332"/>
<dbReference type="KEGG" id="mmu:53332"/>
<dbReference type="UCSC" id="uc009tjt.1">
    <property type="organism name" value="mouse"/>
</dbReference>
<dbReference type="AGR" id="MGI:1858271"/>
<dbReference type="CTD" id="8776"/>
<dbReference type="MGI" id="MGI:1858271">
    <property type="gene designation" value="Mtmr1"/>
</dbReference>
<dbReference type="VEuPathDB" id="HostDB:ENSMUSG00000015214"/>
<dbReference type="eggNOG" id="KOG4471">
    <property type="taxonomic scope" value="Eukaryota"/>
</dbReference>
<dbReference type="GeneTree" id="ENSGT00940000153669"/>
<dbReference type="HOGENOM" id="CLU_001839_4_1_1"/>
<dbReference type="InParanoid" id="Q9Z2C4"/>
<dbReference type="OMA" id="PESWRIT"/>
<dbReference type="PhylomeDB" id="Q9Z2C4"/>
<dbReference type="BRENDA" id="3.1.3.64">
    <property type="organism ID" value="3474"/>
</dbReference>
<dbReference type="Reactome" id="R-MMU-1660499">
    <property type="pathway name" value="Synthesis of PIPs at the plasma membrane"/>
</dbReference>
<dbReference type="Reactome" id="R-MMU-9035034">
    <property type="pathway name" value="RHOF GTPase cycle"/>
</dbReference>
<dbReference type="BioGRID-ORCS" id="53332">
    <property type="hits" value="1 hit in 80 CRISPR screens"/>
</dbReference>
<dbReference type="CD-CODE" id="CE726F99">
    <property type="entry name" value="Postsynaptic density"/>
</dbReference>
<dbReference type="ChiTaRS" id="Mtmr1">
    <property type="organism name" value="mouse"/>
</dbReference>
<dbReference type="PRO" id="PR:Q9Z2C4"/>
<dbReference type="Proteomes" id="UP000000589">
    <property type="component" value="Chromosome X"/>
</dbReference>
<dbReference type="RNAct" id="Q9Z2C4">
    <property type="molecule type" value="protein"/>
</dbReference>
<dbReference type="Bgee" id="ENSMUSG00000015214">
    <property type="expression patterns" value="Expressed in hindlimb stylopod muscle and 234 other cell types or tissues"/>
</dbReference>
<dbReference type="ExpressionAtlas" id="Q9Z2C4">
    <property type="expression patterns" value="baseline and differential"/>
</dbReference>
<dbReference type="GO" id="GO:0005737">
    <property type="term" value="C:cytoplasm"/>
    <property type="evidence" value="ECO:0000314"/>
    <property type="project" value="MGI"/>
</dbReference>
<dbReference type="GO" id="GO:0005886">
    <property type="term" value="C:plasma membrane"/>
    <property type="evidence" value="ECO:0000314"/>
    <property type="project" value="MGI"/>
</dbReference>
<dbReference type="GO" id="GO:0052629">
    <property type="term" value="F:phosphatidylinositol-3,5-bisphosphate 3-phosphatase activity"/>
    <property type="evidence" value="ECO:0000250"/>
    <property type="project" value="UniProtKB"/>
</dbReference>
<dbReference type="GO" id="GO:0004438">
    <property type="term" value="F:phosphatidylinositol-3-phosphate phosphatase activity"/>
    <property type="evidence" value="ECO:0000314"/>
    <property type="project" value="MGI"/>
</dbReference>
<dbReference type="GO" id="GO:0046856">
    <property type="term" value="P:phosphatidylinositol dephosphorylation"/>
    <property type="evidence" value="ECO:0000250"/>
    <property type="project" value="UniProtKB"/>
</dbReference>
<dbReference type="CDD" id="cd13358">
    <property type="entry name" value="PH-GRAM_MTMR1"/>
    <property type="match status" value="1"/>
</dbReference>
<dbReference type="CDD" id="cd14592">
    <property type="entry name" value="PTP-MTMR1"/>
    <property type="match status" value="1"/>
</dbReference>
<dbReference type="FunFam" id="2.30.29.30:FF:000038">
    <property type="entry name" value="Myotubularin 1, isoform CRA_a"/>
    <property type="match status" value="1"/>
</dbReference>
<dbReference type="Gene3D" id="2.30.29.30">
    <property type="entry name" value="Pleckstrin-homology domain (PH domain)/Phosphotyrosine-binding domain (PTB)"/>
    <property type="match status" value="1"/>
</dbReference>
<dbReference type="InterPro" id="IPR004182">
    <property type="entry name" value="GRAM"/>
</dbReference>
<dbReference type="InterPro" id="IPR037857">
    <property type="entry name" value="MTMR1_PH-GRAM"/>
</dbReference>
<dbReference type="InterPro" id="IPR030587">
    <property type="entry name" value="MTMR1_PTP"/>
</dbReference>
<dbReference type="InterPro" id="IPR030564">
    <property type="entry name" value="Myotubularin"/>
</dbReference>
<dbReference type="InterPro" id="IPR010569">
    <property type="entry name" value="Myotubularin-like_Pase_dom"/>
</dbReference>
<dbReference type="InterPro" id="IPR011993">
    <property type="entry name" value="PH-like_dom_sf"/>
</dbReference>
<dbReference type="InterPro" id="IPR029021">
    <property type="entry name" value="Prot-tyrosine_phosphatase-like"/>
</dbReference>
<dbReference type="InterPro" id="IPR016130">
    <property type="entry name" value="Tyr_Pase_AS"/>
</dbReference>
<dbReference type="InterPro" id="IPR003595">
    <property type="entry name" value="Tyr_Pase_cat"/>
</dbReference>
<dbReference type="InterPro" id="IPR000387">
    <property type="entry name" value="Tyr_Pase_dom"/>
</dbReference>
<dbReference type="PANTHER" id="PTHR10807">
    <property type="entry name" value="MYOTUBULARIN-RELATED"/>
    <property type="match status" value="1"/>
</dbReference>
<dbReference type="PANTHER" id="PTHR10807:SF40">
    <property type="entry name" value="MYOTUBULARIN-RELATED PROTEIN 1"/>
    <property type="match status" value="1"/>
</dbReference>
<dbReference type="Pfam" id="PF02893">
    <property type="entry name" value="GRAM"/>
    <property type="match status" value="1"/>
</dbReference>
<dbReference type="Pfam" id="PF06602">
    <property type="entry name" value="Myotub-related"/>
    <property type="match status" value="1"/>
</dbReference>
<dbReference type="SMART" id="SM00568">
    <property type="entry name" value="GRAM"/>
    <property type="match status" value="1"/>
</dbReference>
<dbReference type="SMART" id="SM00404">
    <property type="entry name" value="PTPc_motif"/>
    <property type="match status" value="1"/>
</dbReference>
<dbReference type="SUPFAM" id="SSF52799">
    <property type="entry name" value="(Phosphotyrosine protein) phosphatases II"/>
    <property type="match status" value="1"/>
</dbReference>
<dbReference type="SUPFAM" id="SSF50729">
    <property type="entry name" value="PH domain-like"/>
    <property type="match status" value="1"/>
</dbReference>
<dbReference type="PROSITE" id="PS51339">
    <property type="entry name" value="PPASE_MYOTUBULARIN"/>
    <property type="match status" value="1"/>
</dbReference>
<dbReference type="PROSITE" id="PS00383">
    <property type="entry name" value="TYR_PHOSPHATASE_1"/>
    <property type="match status" value="1"/>
</dbReference>
<dbReference type="PROSITE" id="PS50056">
    <property type="entry name" value="TYR_PHOSPHATASE_2"/>
    <property type="match status" value="1"/>
</dbReference>
<sequence length="669" mass="75313">MDRPVAAAAAASAASCEGAGGPGPGPGASWRPSRVAGGASASSRHPSIETLDSPTGSHVEWCKQLIAATISSQISGSVTSENVSRDYKALRDGNKLAQMEEAPLFPGESIKAIVKDVIYICPFMGAVSGTLTVTDFKMYFKNVERDPHFVLDVPLGVISRVEKIGAQSHGDNSCGIEIVCKDMRNLRLAYKQEEQRKLGIFENLNKHAFPLSNGQVLFAFNYKEKFPVNGWKVYDPVSEYKRQGLPNESWKISKINSNYEFCDTYPAIIVVPTSVKDDDLSKVAAFRAKGRVPVLSWIHPESQATITRCSQPLVGPNDKRCKEDEKYLQTIMDANAQSHKLTIFDARQNSVADTNKAKGGGYENESAYPNAELIFLEIHNIHVMRESLRKLKEIVYPSIDESHWLSNVDGTHWLEYIRVLLAGAVRIADKIESGKTSVVIHCSDGWDRTSQLTSLAMLMLDSYYRTIKGFEALIEKEWISFGHRFALRVGHGDDNHADADRSPIFLQFIDCVWQMTRQFPSAFEFNELFLITILDHLYSCLFGTFLCNCEQQRIKEDVYTNTISLWSYINSQLDEFSNPFFVNYENHVLYPVASMSHLELWVNYYVRWNPRMRPQMPIHQNLKELLAIKAELQKRVEDLQREMATRTISSSSERGSSPTHSATPVHTSV</sequence>